<organism>
    <name type="scientific">Anopheles gambiae</name>
    <name type="common">African malaria mosquito</name>
    <dbReference type="NCBI Taxonomy" id="7165"/>
    <lineage>
        <taxon>Eukaryota</taxon>
        <taxon>Metazoa</taxon>
        <taxon>Ecdysozoa</taxon>
        <taxon>Arthropoda</taxon>
        <taxon>Hexapoda</taxon>
        <taxon>Insecta</taxon>
        <taxon>Pterygota</taxon>
        <taxon>Neoptera</taxon>
        <taxon>Endopterygota</taxon>
        <taxon>Diptera</taxon>
        <taxon>Nematocera</taxon>
        <taxon>Culicoidea</taxon>
        <taxon>Culicidae</taxon>
        <taxon>Anophelinae</taxon>
        <taxon>Anopheles</taxon>
    </lineage>
</organism>
<gene>
    <name evidence="2" type="primary">alpha-Adaptin</name>
    <name type="ORF">AGAP009538</name>
</gene>
<proteinExistence type="inferred from homology"/>
<protein>
    <recommendedName>
        <fullName>AP-2 complex subunit alpha</fullName>
    </recommendedName>
    <alternativeName>
        <fullName>Alpha-adaptin</fullName>
    </alternativeName>
</protein>
<name>AP2A_ANOGA</name>
<sequence>MAPVRGDGMRGLAVFISDIRNCKSKEAEIKRINKELANIRSKFKGDKTLDGYQKKKYVCKLLFIFLLGHDIDFGHMEAVNLLSSNKYSEKQIGYLFISVLVNTNSDLIKLIIQSIKNDLQSRNPIHVNLALQCIANIGSQDMAEAFSNEIPKLLVSGDTMDVVKQSAALCLLRLFRTCPDIIPGGEWTSRIIHLLNDQHMGVVTAATSLIDALVKKNPEEYKGCVSLAVSRLSRIVTASYTDLQDYTYYFVPAPWLSVKLLRLLQNYNPPTEDPGVRGRLNECLETILNKAQEPPKSKKVQHSNAKNAVLFEAINLIIHNDSEPSLLVRACNQLGQFLSNRETNLRYLALESMCHLATSEFSHEAVKKHQEVVILSMKMEKDVSVRQQAVDLLYAMCDRSNAEEIVQEMLNYLETADYSIREEMVLKVAILAEKYATDYTWYVDVILNLIRIAGDYVSEEVWYRVIQIVINREEVQGYAAKTVFEALQAPACHENMVKVGGYILGEFGNLIAGDSRSAPMVQFKLLHSKYHLCSSMTRALLLSTYIKFINLFPEIRGTIQDVFRQHSNLRSADAELQQRASEYLQLSIVASTDVLATVLEEMPSFPERESSILAVLKKKKPGRVPENAEIRETKSPVPNSHNNAHSNAQTNHTSSANNANASSDLLGLSTPPASQSGTLIDVLGDIYSTANGNSNVVNNSKKFVFKNNGVLFENDLLQIGVKSEFRQNLGRLGLYYGNKTQTALQNFVPTLQWSAEDALKLNVQIKAVEPTLEAGAQIQQLLTAECIDHYLGAPSIVISFRVSGGAPQKITVNLPLTINKFFEPTEMNAESFFARWRNLGGEQQRAQRVFKAQQPLDLPGARNKLTGFGMQLLDSIDPNPDNMVCAGIIHTQAHKVGCLLRLEPNKQAQMFRLTIRSSLEAVTQEICDLLVDQF</sequence>
<keyword id="KW-1003">Cell membrane</keyword>
<keyword id="KW-0168">Coated pit</keyword>
<keyword id="KW-0254">Endocytosis</keyword>
<keyword id="KW-0472">Membrane</keyword>
<keyword id="KW-0653">Protein transport</keyword>
<keyword id="KW-1185">Reference proteome</keyword>
<keyword id="KW-0813">Transport</keyword>
<comment type="function">
    <text evidence="2">Adaptins are components of the adapter complexes which link clathrin to receptors in coated vesicles. Clathrin-associated protein complexes are believed to interact with the cytoplasmic tails of membrane proteins, leading to their selection and concentration. Alpha adaptin is a subunit of the plasma membrane adapter (By similarity).</text>
</comment>
<comment type="subunit">
    <text evidence="1">Adaptor protein complex 2 (AP-2) is a heterotetramer composed of two large adaptins (alpha-type and beta-type subunits), a medium adaptin (mu-type subunit AP50) and a small adaptin (sigma-type subunit AP17).</text>
</comment>
<comment type="subcellular location">
    <subcellularLocation>
        <location evidence="2">Cell membrane</location>
        <topology evidence="2">Peripheral membrane protein</topology>
        <orientation evidence="2">Cytoplasmic side</orientation>
    </subcellularLocation>
    <subcellularLocation>
        <location evidence="2">Membrane</location>
        <location evidence="2">Coated pit</location>
        <topology evidence="2">Peripheral membrane protein</topology>
        <orientation evidence="2">Cytoplasmic side</orientation>
    </subcellularLocation>
    <text evidence="2">Component of the coat surrounding the cytoplasmic face of coated vesicles in the plasma membrane.</text>
</comment>
<comment type="similarity">
    <text evidence="3">Belongs to the adapter complexes large subunit family.</text>
</comment>
<evidence type="ECO:0000250" key="1"/>
<evidence type="ECO:0000250" key="2">
    <source>
        <dbReference type="UniProtKB" id="P91926"/>
    </source>
</evidence>
<evidence type="ECO:0000255" key="3"/>
<evidence type="ECO:0000256" key="4">
    <source>
        <dbReference type="SAM" id="MobiDB-lite"/>
    </source>
</evidence>
<feature type="chain" id="PRO_0000278176" description="AP-2 complex subunit alpha">
    <location>
        <begin position="1"/>
        <end position="934"/>
    </location>
</feature>
<feature type="region of interest" description="Disordered" evidence="4">
    <location>
        <begin position="623"/>
        <end position="670"/>
    </location>
</feature>
<feature type="compositionally biased region" description="Polar residues" evidence="4">
    <location>
        <begin position="636"/>
        <end position="645"/>
    </location>
</feature>
<feature type="compositionally biased region" description="Low complexity" evidence="4">
    <location>
        <begin position="646"/>
        <end position="663"/>
    </location>
</feature>
<dbReference type="EMBL" id="AAAB01008839">
    <property type="protein sequence ID" value="EAA05923.4"/>
    <property type="molecule type" value="Genomic_DNA"/>
</dbReference>
<dbReference type="RefSeq" id="XP_310153.4">
    <property type="nucleotide sequence ID" value="XM_310153.4"/>
</dbReference>
<dbReference type="SMR" id="Q7QG73"/>
<dbReference type="FunCoup" id="Q7QG73">
    <property type="interactions" value="2330"/>
</dbReference>
<dbReference type="STRING" id="7165.Q7QG73"/>
<dbReference type="PaxDb" id="7165-AGAP009538-PA"/>
<dbReference type="EnsemblMetazoa" id="AGAP009538-RA">
    <property type="protein sequence ID" value="AGAP009538-PA"/>
    <property type="gene ID" value="AGAP009538"/>
</dbReference>
<dbReference type="VEuPathDB" id="VectorBase:AGAMI1_002588"/>
<dbReference type="VEuPathDB" id="VectorBase:AGAP009538"/>
<dbReference type="eggNOG" id="KOG1077">
    <property type="taxonomic scope" value="Eukaryota"/>
</dbReference>
<dbReference type="HOGENOM" id="CLU_003824_1_0_1"/>
<dbReference type="InParanoid" id="Q7QG73"/>
<dbReference type="OMA" id="PVLMHRY"/>
<dbReference type="OrthoDB" id="413467at2759"/>
<dbReference type="PhylomeDB" id="Q7QG73"/>
<dbReference type="Proteomes" id="UP000007062">
    <property type="component" value="Chromosome 3R"/>
</dbReference>
<dbReference type="GO" id="GO:0030122">
    <property type="term" value="C:AP-2 adaptor complex"/>
    <property type="evidence" value="ECO:0000318"/>
    <property type="project" value="GO_Central"/>
</dbReference>
<dbReference type="GO" id="GO:0005905">
    <property type="term" value="C:clathrin-coated pit"/>
    <property type="evidence" value="ECO:0000250"/>
    <property type="project" value="UniProtKB"/>
</dbReference>
<dbReference type="GO" id="GO:0005886">
    <property type="term" value="C:plasma membrane"/>
    <property type="evidence" value="ECO:0000250"/>
    <property type="project" value="UniProtKB"/>
</dbReference>
<dbReference type="GO" id="GO:0098793">
    <property type="term" value="C:presynapse"/>
    <property type="evidence" value="ECO:0007669"/>
    <property type="project" value="GOC"/>
</dbReference>
<dbReference type="GO" id="GO:0035615">
    <property type="term" value="F:clathrin adaptor activity"/>
    <property type="evidence" value="ECO:0000318"/>
    <property type="project" value="GO_Central"/>
</dbReference>
<dbReference type="GO" id="GO:0072583">
    <property type="term" value="P:clathrin-dependent endocytosis"/>
    <property type="evidence" value="ECO:0000318"/>
    <property type="project" value="GO_Central"/>
</dbReference>
<dbReference type="GO" id="GO:0006886">
    <property type="term" value="P:intracellular protein transport"/>
    <property type="evidence" value="ECO:0007669"/>
    <property type="project" value="InterPro"/>
</dbReference>
<dbReference type="GO" id="GO:0015031">
    <property type="term" value="P:protein transport"/>
    <property type="evidence" value="ECO:0000250"/>
    <property type="project" value="UniProtKB"/>
</dbReference>
<dbReference type="GO" id="GO:0048488">
    <property type="term" value="P:synaptic vesicle endocytosis"/>
    <property type="evidence" value="ECO:0000250"/>
    <property type="project" value="UniProtKB"/>
</dbReference>
<dbReference type="FunFam" id="1.25.10.10:FF:000020">
    <property type="entry name" value="AP-2 complex subunit alpha"/>
    <property type="match status" value="1"/>
</dbReference>
<dbReference type="FunFam" id="2.60.40.1230:FF:000003">
    <property type="entry name" value="AP-2 complex subunit alpha"/>
    <property type="match status" value="1"/>
</dbReference>
<dbReference type="FunFam" id="3.30.310.10:FF:000004">
    <property type="entry name" value="AP-2 complex subunit alpha"/>
    <property type="match status" value="1"/>
</dbReference>
<dbReference type="Gene3D" id="2.60.40.1230">
    <property type="match status" value="1"/>
</dbReference>
<dbReference type="Gene3D" id="1.25.10.10">
    <property type="entry name" value="Leucine-rich Repeat Variant"/>
    <property type="match status" value="1"/>
</dbReference>
<dbReference type="Gene3D" id="3.30.310.10">
    <property type="entry name" value="TATA-Binding Protein"/>
    <property type="match status" value="1"/>
</dbReference>
<dbReference type="InterPro" id="IPR050840">
    <property type="entry name" value="Adaptor_Complx_Large_Subunit"/>
</dbReference>
<dbReference type="InterPro" id="IPR017104">
    <property type="entry name" value="AP2_complex_asu"/>
</dbReference>
<dbReference type="InterPro" id="IPR011989">
    <property type="entry name" value="ARM-like"/>
</dbReference>
<dbReference type="InterPro" id="IPR016024">
    <property type="entry name" value="ARM-type_fold"/>
</dbReference>
<dbReference type="InterPro" id="IPR002553">
    <property type="entry name" value="Clathrin/coatomer_adapt-like_N"/>
</dbReference>
<dbReference type="InterPro" id="IPR003164">
    <property type="entry name" value="Clathrin_a-adaptin_app_sub_C"/>
</dbReference>
<dbReference type="InterPro" id="IPR008152">
    <property type="entry name" value="Clathrin_a/b/g-adaptin_app_Ig"/>
</dbReference>
<dbReference type="InterPro" id="IPR013041">
    <property type="entry name" value="Clathrin_app_Ig-like_sf"/>
</dbReference>
<dbReference type="InterPro" id="IPR009028">
    <property type="entry name" value="Coatomer/calthrin_app_sub_C"/>
</dbReference>
<dbReference type="InterPro" id="IPR012295">
    <property type="entry name" value="TBP_dom_sf"/>
</dbReference>
<dbReference type="PANTHER" id="PTHR22780">
    <property type="entry name" value="ADAPTIN, ALPHA/GAMMA/EPSILON"/>
    <property type="match status" value="1"/>
</dbReference>
<dbReference type="Pfam" id="PF01602">
    <property type="entry name" value="Adaptin_N"/>
    <property type="match status" value="1"/>
</dbReference>
<dbReference type="Pfam" id="PF02296">
    <property type="entry name" value="Alpha_adaptin_C"/>
    <property type="match status" value="1"/>
</dbReference>
<dbReference type="Pfam" id="PF02883">
    <property type="entry name" value="Alpha_adaptinC2"/>
    <property type="match status" value="1"/>
</dbReference>
<dbReference type="PIRSF" id="PIRSF037091">
    <property type="entry name" value="AP2_complex_alpha"/>
    <property type="match status" value="1"/>
</dbReference>
<dbReference type="SMART" id="SM00809">
    <property type="entry name" value="Alpha_adaptinC2"/>
    <property type="match status" value="1"/>
</dbReference>
<dbReference type="SUPFAM" id="SSF48371">
    <property type="entry name" value="ARM repeat"/>
    <property type="match status" value="1"/>
</dbReference>
<dbReference type="SUPFAM" id="SSF49348">
    <property type="entry name" value="Clathrin adaptor appendage domain"/>
    <property type="match status" value="1"/>
</dbReference>
<dbReference type="SUPFAM" id="SSF55711">
    <property type="entry name" value="Subdomain of clathrin and coatomer appendage domain"/>
    <property type="match status" value="1"/>
</dbReference>
<accession>Q7QG73</accession>
<reference key="1">
    <citation type="journal article" date="2002" name="Science">
        <title>The genome sequence of the malaria mosquito Anopheles gambiae.</title>
        <authorList>
            <person name="Holt R.A."/>
            <person name="Subramanian G.M."/>
            <person name="Halpern A."/>
            <person name="Sutton G.G."/>
            <person name="Charlab R."/>
            <person name="Nusskern D.R."/>
            <person name="Wincker P."/>
            <person name="Clark A.G."/>
            <person name="Ribeiro J.M.C."/>
            <person name="Wides R."/>
            <person name="Salzberg S.L."/>
            <person name="Loftus B.J."/>
            <person name="Yandell M.D."/>
            <person name="Majoros W.H."/>
            <person name="Rusch D.B."/>
            <person name="Lai Z."/>
            <person name="Kraft C.L."/>
            <person name="Abril J.F."/>
            <person name="Anthouard V."/>
            <person name="Arensburger P."/>
            <person name="Atkinson P.W."/>
            <person name="Baden H."/>
            <person name="de Berardinis V."/>
            <person name="Baldwin D."/>
            <person name="Benes V."/>
            <person name="Biedler J."/>
            <person name="Blass C."/>
            <person name="Bolanos R."/>
            <person name="Boscus D."/>
            <person name="Barnstead M."/>
            <person name="Cai S."/>
            <person name="Center A."/>
            <person name="Chaturverdi K."/>
            <person name="Christophides G.K."/>
            <person name="Chrystal M.A.M."/>
            <person name="Clamp M."/>
            <person name="Cravchik A."/>
            <person name="Curwen V."/>
            <person name="Dana A."/>
            <person name="Delcher A."/>
            <person name="Dew I."/>
            <person name="Evans C.A."/>
            <person name="Flanigan M."/>
            <person name="Grundschober-Freimoser A."/>
            <person name="Friedli L."/>
            <person name="Gu Z."/>
            <person name="Guan P."/>
            <person name="Guigo R."/>
            <person name="Hillenmeyer M.E."/>
            <person name="Hladun S.L."/>
            <person name="Hogan J.R."/>
            <person name="Hong Y.S."/>
            <person name="Hoover J."/>
            <person name="Jaillon O."/>
            <person name="Ke Z."/>
            <person name="Kodira C.D."/>
            <person name="Kokoza E."/>
            <person name="Koutsos A."/>
            <person name="Letunic I."/>
            <person name="Levitsky A.A."/>
            <person name="Liang Y."/>
            <person name="Lin J.-J."/>
            <person name="Lobo N.F."/>
            <person name="Lopez J.R."/>
            <person name="Malek J.A."/>
            <person name="McIntosh T.C."/>
            <person name="Meister S."/>
            <person name="Miller J.R."/>
            <person name="Mobarry C."/>
            <person name="Mongin E."/>
            <person name="Murphy S.D."/>
            <person name="O'Brochta D.A."/>
            <person name="Pfannkoch C."/>
            <person name="Qi R."/>
            <person name="Regier M.A."/>
            <person name="Remington K."/>
            <person name="Shao H."/>
            <person name="Sharakhova M.V."/>
            <person name="Sitter C.D."/>
            <person name="Shetty J."/>
            <person name="Smith T.J."/>
            <person name="Strong R."/>
            <person name="Sun J."/>
            <person name="Thomasova D."/>
            <person name="Ton L.Q."/>
            <person name="Topalis P."/>
            <person name="Tu Z.J."/>
            <person name="Unger M.F."/>
            <person name="Walenz B."/>
            <person name="Wang A.H."/>
            <person name="Wang J."/>
            <person name="Wang M."/>
            <person name="Wang X."/>
            <person name="Woodford K.J."/>
            <person name="Wortman J.R."/>
            <person name="Wu M."/>
            <person name="Yao A."/>
            <person name="Zdobnov E.M."/>
            <person name="Zhang H."/>
            <person name="Zhao Q."/>
            <person name="Zhao S."/>
            <person name="Zhu S.C."/>
            <person name="Zhimulev I."/>
            <person name="Coluzzi M."/>
            <person name="della Torre A."/>
            <person name="Roth C.W."/>
            <person name="Louis C."/>
            <person name="Kalush F."/>
            <person name="Mural R.J."/>
            <person name="Myers E.W."/>
            <person name="Adams M.D."/>
            <person name="Smith H.O."/>
            <person name="Broder S."/>
            <person name="Gardner M.J."/>
            <person name="Fraser C.M."/>
            <person name="Birney E."/>
            <person name="Bork P."/>
            <person name="Brey P.T."/>
            <person name="Venter J.C."/>
            <person name="Weissenbach J."/>
            <person name="Kafatos F.C."/>
            <person name="Collins F.H."/>
            <person name="Hoffman S.L."/>
        </authorList>
    </citation>
    <scope>NUCLEOTIDE SEQUENCE [LARGE SCALE GENOMIC DNA]</scope>
    <source>
        <strain>PEST</strain>
    </source>
</reference>